<accession>Q21CI6</accession>
<dbReference type="EC" id="2.7.7.56" evidence="1"/>
<dbReference type="EMBL" id="CP000301">
    <property type="protein sequence ID" value="ABD85900.1"/>
    <property type="molecule type" value="Genomic_DNA"/>
</dbReference>
<dbReference type="SMR" id="Q21CI6"/>
<dbReference type="STRING" id="316056.RPC_0325"/>
<dbReference type="KEGG" id="rpc:RPC_0325"/>
<dbReference type="eggNOG" id="COG0689">
    <property type="taxonomic scope" value="Bacteria"/>
</dbReference>
<dbReference type="HOGENOM" id="CLU_050858_0_0_5"/>
<dbReference type="OrthoDB" id="9802265at2"/>
<dbReference type="GO" id="GO:0000175">
    <property type="term" value="F:3'-5'-RNA exonuclease activity"/>
    <property type="evidence" value="ECO:0007669"/>
    <property type="project" value="UniProtKB-UniRule"/>
</dbReference>
<dbReference type="GO" id="GO:0000049">
    <property type="term" value="F:tRNA binding"/>
    <property type="evidence" value="ECO:0007669"/>
    <property type="project" value="UniProtKB-UniRule"/>
</dbReference>
<dbReference type="GO" id="GO:0009022">
    <property type="term" value="F:tRNA nucleotidyltransferase activity"/>
    <property type="evidence" value="ECO:0007669"/>
    <property type="project" value="UniProtKB-UniRule"/>
</dbReference>
<dbReference type="GO" id="GO:0016075">
    <property type="term" value="P:rRNA catabolic process"/>
    <property type="evidence" value="ECO:0007669"/>
    <property type="project" value="UniProtKB-UniRule"/>
</dbReference>
<dbReference type="GO" id="GO:0006364">
    <property type="term" value="P:rRNA processing"/>
    <property type="evidence" value="ECO:0007669"/>
    <property type="project" value="UniProtKB-KW"/>
</dbReference>
<dbReference type="GO" id="GO:0008033">
    <property type="term" value="P:tRNA processing"/>
    <property type="evidence" value="ECO:0007669"/>
    <property type="project" value="UniProtKB-UniRule"/>
</dbReference>
<dbReference type="CDD" id="cd11362">
    <property type="entry name" value="RNase_PH_bact"/>
    <property type="match status" value="1"/>
</dbReference>
<dbReference type="FunFam" id="3.30.230.70:FF:000003">
    <property type="entry name" value="Ribonuclease PH"/>
    <property type="match status" value="1"/>
</dbReference>
<dbReference type="Gene3D" id="3.30.230.70">
    <property type="entry name" value="GHMP Kinase, N-terminal domain"/>
    <property type="match status" value="1"/>
</dbReference>
<dbReference type="HAMAP" id="MF_00564">
    <property type="entry name" value="RNase_PH"/>
    <property type="match status" value="1"/>
</dbReference>
<dbReference type="InterPro" id="IPR001247">
    <property type="entry name" value="ExoRNase_PH_dom1"/>
</dbReference>
<dbReference type="InterPro" id="IPR015847">
    <property type="entry name" value="ExoRNase_PH_dom2"/>
</dbReference>
<dbReference type="InterPro" id="IPR036345">
    <property type="entry name" value="ExoRNase_PH_dom2_sf"/>
</dbReference>
<dbReference type="InterPro" id="IPR027408">
    <property type="entry name" value="PNPase/RNase_PH_dom_sf"/>
</dbReference>
<dbReference type="InterPro" id="IPR020568">
    <property type="entry name" value="Ribosomal_Su5_D2-typ_SF"/>
</dbReference>
<dbReference type="InterPro" id="IPR050080">
    <property type="entry name" value="RNase_PH"/>
</dbReference>
<dbReference type="InterPro" id="IPR002381">
    <property type="entry name" value="RNase_PH_bac-type"/>
</dbReference>
<dbReference type="InterPro" id="IPR018336">
    <property type="entry name" value="RNase_PH_CS"/>
</dbReference>
<dbReference type="NCBIfam" id="TIGR01966">
    <property type="entry name" value="RNasePH"/>
    <property type="match status" value="1"/>
</dbReference>
<dbReference type="PANTHER" id="PTHR11953">
    <property type="entry name" value="EXOSOME COMPLEX COMPONENT"/>
    <property type="match status" value="1"/>
</dbReference>
<dbReference type="PANTHER" id="PTHR11953:SF0">
    <property type="entry name" value="EXOSOME COMPLEX COMPONENT RRP41"/>
    <property type="match status" value="1"/>
</dbReference>
<dbReference type="Pfam" id="PF01138">
    <property type="entry name" value="RNase_PH"/>
    <property type="match status" value="1"/>
</dbReference>
<dbReference type="Pfam" id="PF03725">
    <property type="entry name" value="RNase_PH_C"/>
    <property type="match status" value="1"/>
</dbReference>
<dbReference type="SUPFAM" id="SSF55666">
    <property type="entry name" value="Ribonuclease PH domain 2-like"/>
    <property type="match status" value="1"/>
</dbReference>
<dbReference type="SUPFAM" id="SSF54211">
    <property type="entry name" value="Ribosomal protein S5 domain 2-like"/>
    <property type="match status" value="1"/>
</dbReference>
<dbReference type="PROSITE" id="PS01277">
    <property type="entry name" value="RIBONUCLEASE_PH"/>
    <property type="match status" value="1"/>
</dbReference>
<feature type="chain" id="PRO_1000024864" description="Ribonuclease PH">
    <location>
        <begin position="1"/>
        <end position="239"/>
    </location>
</feature>
<feature type="binding site" evidence="1">
    <location>
        <position position="86"/>
    </location>
    <ligand>
        <name>phosphate</name>
        <dbReference type="ChEBI" id="CHEBI:43474"/>
        <note>substrate</note>
    </ligand>
</feature>
<feature type="binding site" evidence="1">
    <location>
        <begin position="124"/>
        <end position="126"/>
    </location>
    <ligand>
        <name>phosphate</name>
        <dbReference type="ChEBI" id="CHEBI:43474"/>
        <note>substrate</note>
    </ligand>
</feature>
<name>RNPH_RHOPB</name>
<sequence length="239" mass="26018">MRPSRRAPDELRAVSLERGVVKYAEGSCMVKFGDTHVLVTATLEDRLPPWLKGQGRGWVTAEYGMLPRATLERTRREASAGKQNGRTVEIQRLIGRSLRATVDLQALGERQITVDCDVIQADGGTRTASITGAWVALADCIGWMKTRNMFKGTAPVLRDNVAAISCGIYNGTPVLDLDYAEDSEADTDANFVMTGDGRIIEVQGTAEKTPFSQDEFLALMALAKKGVARLVDLQKMAVA</sequence>
<organism>
    <name type="scientific">Rhodopseudomonas palustris (strain BisB18)</name>
    <dbReference type="NCBI Taxonomy" id="316056"/>
    <lineage>
        <taxon>Bacteria</taxon>
        <taxon>Pseudomonadati</taxon>
        <taxon>Pseudomonadota</taxon>
        <taxon>Alphaproteobacteria</taxon>
        <taxon>Hyphomicrobiales</taxon>
        <taxon>Nitrobacteraceae</taxon>
        <taxon>Rhodopseudomonas</taxon>
    </lineage>
</organism>
<reference key="1">
    <citation type="submission" date="2006-03" db="EMBL/GenBank/DDBJ databases">
        <title>Complete sequence of Rhodopseudomonas palustris BisB18.</title>
        <authorList>
            <consortium name="US DOE Joint Genome Institute"/>
            <person name="Copeland A."/>
            <person name="Lucas S."/>
            <person name="Lapidus A."/>
            <person name="Barry K."/>
            <person name="Detter J.C."/>
            <person name="Glavina del Rio T."/>
            <person name="Hammon N."/>
            <person name="Israni S."/>
            <person name="Dalin E."/>
            <person name="Tice H."/>
            <person name="Pitluck S."/>
            <person name="Chain P."/>
            <person name="Malfatti S."/>
            <person name="Shin M."/>
            <person name="Vergez L."/>
            <person name="Schmutz J."/>
            <person name="Larimer F."/>
            <person name="Land M."/>
            <person name="Hauser L."/>
            <person name="Pelletier D.A."/>
            <person name="Kyrpides N."/>
            <person name="Anderson I."/>
            <person name="Oda Y."/>
            <person name="Harwood C.S."/>
            <person name="Richardson P."/>
        </authorList>
    </citation>
    <scope>NUCLEOTIDE SEQUENCE [LARGE SCALE GENOMIC DNA]</scope>
    <source>
        <strain>BisB18</strain>
    </source>
</reference>
<gene>
    <name evidence="1" type="primary">rph</name>
    <name type="ordered locus">RPC_0325</name>
</gene>
<protein>
    <recommendedName>
        <fullName evidence="1">Ribonuclease PH</fullName>
        <shortName evidence="1">RNase PH</shortName>
        <ecNumber evidence="1">2.7.7.56</ecNumber>
    </recommendedName>
    <alternativeName>
        <fullName evidence="1">tRNA nucleotidyltransferase</fullName>
    </alternativeName>
</protein>
<keyword id="KW-0548">Nucleotidyltransferase</keyword>
<keyword id="KW-0694">RNA-binding</keyword>
<keyword id="KW-0698">rRNA processing</keyword>
<keyword id="KW-0808">Transferase</keyword>
<keyword id="KW-0819">tRNA processing</keyword>
<keyword id="KW-0820">tRNA-binding</keyword>
<comment type="function">
    <text evidence="1">Phosphorolytic 3'-5' exoribonuclease that plays an important role in tRNA 3'-end maturation. Removes nucleotide residues following the 3'-CCA terminus of tRNAs; can also add nucleotides to the ends of RNA molecules by using nucleoside diphosphates as substrates, but this may not be physiologically important. Probably plays a role in initiation of 16S rRNA degradation (leading to ribosome degradation) during starvation.</text>
</comment>
<comment type="catalytic activity">
    <reaction evidence="1">
        <text>tRNA(n+1) + phosphate = tRNA(n) + a ribonucleoside 5'-diphosphate</text>
        <dbReference type="Rhea" id="RHEA:10628"/>
        <dbReference type="Rhea" id="RHEA-COMP:17343"/>
        <dbReference type="Rhea" id="RHEA-COMP:17344"/>
        <dbReference type="ChEBI" id="CHEBI:43474"/>
        <dbReference type="ChEBI" id="CHEBI:57930"/>
        <dbReference type="ChEBI" id="CHEBI:173114"/>
        <dbReference type="EC" id="2.7.7.56"/>
    </reaction>
</comment>
<comment type="subunit">
    <text evidence="1">Homohexameric ring arranged as a trimer of dimers.</text>
</comment>
<comment type="similarity">
    <text evidence="1">Belongs to the RNase PH family.</text>
</comment>
<proteinExistence type="inferred from homology"/>
<evidence type="ECO:0000255" key="1">
    <source>
        <dbReference type="HAMAP-Rule" id="MF_00564"/>
    </source>
</evidence>